<keyword id="KW-0002">3D-structure</keyword>
<keyword id="KW-0119">Carbohydrate metabolism</keyword>
<keyword id="KW-0413">Isomerase</keyword>
<keyword id="KW-1185">Reference proteome</keyword>
<protein>
    <recommendedName>
        <fullName evidence="4">Ribose-5-phosphate isomerase B</fullName>
        <ecNumber evidence="1 3">5.3.1.6</ecNumber>
    </recommendedName>
    <alternativeName>
        <fullName evidence="4">Phosphoriboisomerase B</fullName>
    </alternativeName>
</protein>
<feature type="chain" id="PRO_0000251148" description="Ribose-5-phosphate isomerase B">
    <location>
        <begin position="1"/>
        <end position="162"/>
    </location>
</feature>
<feature type="active site" description="Proton acceptor" evidence="6 7 9 10 11 12 13">
    <location>
        <position position="75"/>
    </location>
</feature>
<feature type="active site" description="Proton donor" evidence="6 7 9 10 11 12 13">
    <location>
        <position position="102"/>
    </location>
</feature>
<feature type="binding site" evidence="1 2 3 8 9 10 11 12 13">
    <location>
        <begin position="11"/>
        <end position="12"/>
    </location>
    <ligand>
        <name>D-ribulose 5-phosphate</name>
        <dbReference type="ChEBI" id="CHEBI:58121"/>
    </ligand>
</feature>
<feature type="binding site" evidence="2 3 9 10 11 12 13">
    <location>
        <begin position="70"/>
        <end position="74"/>
    </location>
    <ligand>
        <name>D-ribulose 5-phosphate</name>
        <dbReference type="ChEBI" id="CHEBI:58121"/>
    </ligand>
</feature>
<feature type="binding site" evidence="2 3 10 11 12">
    <location>
        <position position="103"/>
    </location>
    <ligand>
        <name>D-ribulose 5-phosphate</name>
        <dbReference type="ChEBI" id="CHEBI:58121"/>
    </ligand>
</feature>
<feature type="binding site" evidence="1 2 3 8 9 10 11 12 13">
    <location>
        <position position="113"/>
    </location>
    <ligand>
        <name>D-ribulose 5-phosphate</name>
        <dbReference type="ChEBI" id="CHEBI:58121"/>
    </ligand>
</feature>
<feature type="binding site" evidence="1 2 3 8 9 10 11 12 13">
    <location>
        <position position="137"/>
    </location>
    <ligand>
        <name>D-ribulose 5-phosphate</name>
        <dbReference type="ChEBI" id="CHEBI:58121"/>
    </ligand>
</feature>
<feature type="binding site" evidence="1 3 8 11 12 13">
    <location>
        <position position="141"/>
    </location>
    <ligand>
        <name>D-ribulose 5-phosphate</name>
        <dbReference type="ChEBI" id="CHEBI:58121"/>
    </ligand>
</feature>
<feature type="strand" evidence="14">
    <location>
        <begin position="5"/>
        <end position="10"/>
    </location>
</feature>
<feature type="helix" evidence="14">
    <location>
        <begin position="12"/>
        <end position="27"/>
    </location>
</feature>
<feature type="strand" evidence="14">
    <location>
        <begin position="31"/>
        <end position="34"/>
    </location>
</feature>
<feature type="helix" evidence="14">
    <location>
        <begin position="47"/>
        <end position="59"/>
    </location>
</feature>
<feature type="strand" evidence="14">
    <location>
        <begin position="64"/>
        <end position="72"/>
    </location>
</feature>
<feature type="helix" evidence="14">
    <location>
        <begin position="73"/>
        <end position="80"/>
    </location>
</feature>
<feature type="strand" evidence="14">
    <location>
        <begin position="87"/>
        <end position="89"/>
    </location>
</feature>
<feature type="helix" evidence="14">
    <location>
        <begin position="93"/>
        <end position="101"/>
    </location>
</feature>
<feature type="strand" evidence="14">
    <location>
        <begin position="106"/>
        <end position="111"/>
    </location>
</feature>
<feature type="helix" evidence="14">
    <location>
        <begin position="112"/>
        <end position="114"/>
    </location>
</feature>
<feature type="helix" evidence="14">
    <location>
        <begin position="117"/>
        <end position="129"/>
    </location>
</feature>
<feature type="helix" evidence="14">
    <location>
        <begin position="136"/>
        <end position="151"/>
    </location>
</feature>
<sequence length="162" mass="17278">MSGMRVYLGADHAGYELKQRIIEHLKQTGHEPIDCGALRYDADDDYPAFCIAAATRTVADPGSLGIVLGGSGNGEQIAANKVPGARCALAWSVQTAALAREHNNAQLIGIGGRMHTVAEALAIVDAFVTTPWSKAQRHQRRIDILAEYERTHEAPPVPGAPA</sequence>
<organism>
    <name type="scientific">Mycobacterium tuberculosis (strain ATCC 25618 / H37Rv)</name>
    <dbReference type="NCBI Taxonomy" id="83332"/>
    <lineage>
        <taxon>Bacteria</taxon>
        <taxon>Bacillati</taxon>
        <taxon>Actinomycetota</taxon>
        <taxon>Actinomycetes</taxon>
        <taxon>Mycobacteriales</taxon>
        <taxon>Mycobacteriaceae</taxon>
        <taxon>Mycobacterium</taxon>
        <taxon>Mycobacterium tuberculosis complex</taxon>
    </lineage>
</organism>
<reference key="1">
    <citation type="journal article" date="1998" name="Nature">
        <title>Deciphering the biology of Mycobacterium tuberculosis from the complete genome sequence.</title>
        <authorList>
            <person name="Cole S.T."/>
            <person name="Brosch R."/>
            <person name="Parkhill J."/>
            <person name="Garnier T."/>
            <person name="Churcher C.M."/>
            <person name="Harris D.E."/>
            <person name="Gordon S.V."/>
            <person name="Eiglmeier K."/>
            <person name="Gas S."/>
            <person name="Barry C.E. III"/>
            <person name="Tekaia F."/>
            <person name="Badcock K."/>
            <person name="Basham D."/>
            <person name="Brown D."/>
            <person name="Chillingworth T."/>
            <person name="Connor R."/>
            <person name="Davies R.M."/>
            <person name="Devlin K."/>
            <person name="Feltwell T."/>
            <person name="Gentles S."/>
            <person name="Hamlin N."/>
            <person name="Holroyd S."/>
            <person name="Hornsby T."/>
            <person name="Jagels K."/>
            <person name="Krogh A."/>
            <person name="McLean J."/>
            <person name="Moule S."/>
            <person name="Murphy L.D."/>
            <person name="Oliver S."/>
            <person name="Osborne J."/>
            <person name="Quail M.A."/>
            <person name="Rajandream M.A."/>
            <person name="Rogers J."/>
            <person name="Rutter S."/>
            <person name="Seeger K."/>
            <person name="Skelton S."/>
            <person name="Squares S."/>
            <person name="Squares R."/>
            <person name="Sulston J.E."/>
            <person name="Taylor K."/>
            <person name="Whitehead S."/>
            <person name="Barrell B.G."/>
        </authorList>
    </citation>
    <scope>NUCLEOTIDE SEQUENCE [LARGE SCALE GENOMIC DNA]</scope>
    <source>
        <strain>ATCC 25618 / H37Rv</strain>
    </source>
</reference>
<reference key="2">
    <citation type="journal article" date="2011" name="Mol. Cell. Proteomics">
        <title>Proteogenomic analysis of Mycobacterium tuberculosis by high resolution mass spectrometry.</title>
        <authorList>
            <person name="Kelkar D.S."/>
            <person name="Kumar D."/>
            <person name="Kumar P."/>
            <person name="Balakrishnan L."/>
            <person name="Muthusamy B."/>
            <person name="Yadav A.K."/>
            <person name="Shrivastava P."/>
            <person name="Marimuthu A."/>
            <person name="Anand S."/>
            <person name="Sundaram H."/>
            <person name="Kingsbury R."/>
            <person name="Harsha H.C."/>
            <person name="Nair B."/>
            <person name="Prasad T.S."/>
            <person name="Chauhan D.S."/>
            <person name="Katoch K."/>
            <person name="Katoch V.M."/>
            <person name="Kumar P."/>
            <person name="Chaerkady R."/>
            <person name="Ramachandran S."/>
            <person name="Dash D."/>
            <person name="Pandey A."/>
        </authorList>
    </citation>
    <scope>IDENTIFICATION BY MASS SPECTROMETRY [LARGE SCALE ANALYSIS]</scope>
    <source>
        <strain>ATCC 25618 / H37Rv</strain>
    </source>
</reference>
<reference key="3">
    <citation type="journal article" date="2004" name="J. Mol. Biol.">
        <title>Mycobacterium tuberculosis ribose-5-phosphate isomerase has a known fold, but a novel active site.</title>
        <authorList>
            <person name="Roos A.K."/>
            <person name="Andersson C.E."/>
            <person name="Bergfors T."/>
            <person name="Jacobsson M."/>
            <person name="Karlen A."/>
            <person name="Unge T."/>
            <person name="Jones T.A."/>
            <person name="Mowbray S.L."/>
        </authorList>
    </citation>
    <scope>X-RAY CRYSTALLOGRAPHY (1.88 ANGSTROMS) IN COMPLEX WITH SUBSTRATE ANALOGS</scope>
    <scope>FUNCTION</scope>
    <scope>CATALYTIC ACTIVITY</scope>
    <scope>BIOPHYSICOCHEMICAL PROPERTIES</scope>
    <scope>ACTIVITY REGULATION</scope>
    <scope>SUBUNIT</scope>
</reference>
<reference key="4">
    <citation type="journal article" date="2005" name="J. Biol. Chem.">
        <title>Competitive inhibitors of Mycobacterium tuberculosis ribose-5-phosphate isomerase B reveal new information about the reaction mechanism.</title>
        <authorList>
            <person name="Roos A.K."/>
            <person name="Burgos E."/>
            <person name="Ericsson D.J."/>
            <person name="Salmon L."/>
            <person name="Mowbray S.L."/>
        </authorList>
    </citation>
    <scope>X-RAY CRYSTALLOGRAPHY (2.1 ANGSTROMS) IN COMPLEX WITH SUBSTRATE ANALOGS</scope>
    <scope>SUBUNIT</scope>
    <scope>ACTIVE SITE</scope>
</reference>
<reference evidence="11 12 13" key="5">
    <citation type="journal article" date="2008" name="J. Mol. Biol.">
        <title>D-ribose-5-phosphate isomerase B from Escherichia coli is also a functional D-allose-6-phosphate isomerase, while the Mycobacterium tuberculosis enzyme is not.</title>
        <authorList>
            <person name="Roos A.K."/>
            <person name="Mariano S."/>
            <person name="Kowalinski E."/>
            <person name="Salmon L."/>
            <person name="Mowbray S.L."/>
        </authorList>
    </citation>
    <scope>X-RAY CRYSTALLOGRAPHY (1.65 ANGSTROMS) IN COMPLEX WITH RIBULOSE-5-PHOSPHATE AND SUBSTRATE ANALOGS</scope>
    <scope>FUNCTION</scope>
    <scope>SUBUNIT</scope>
    <scope>CATALYTIC ACTIVITY</scope>
    <scope>BIOPHYSICOCHEMICAL PROPERTIES</scope>
    <scope>ACTIVE SITE</scope>
</reference>
<gene>
    <name evidence="4" type="primary">rpiB</name>
    <name type="ordered locus">Rv2465c</name>
    <name type="ORF">MTV008.21c</name>
</gene>
<comment type="function">
    <text evidence="1 3">Catalyzes the interconversion of ribulose-5-P and ribose-5-P. It has not isomerase activity towards D-allose 6-phosphate.</text>
</comment>
<comment type="catalytic activity">
    <reaction evidence="1 3">
        <text>aldehydo-D-ribose 5-phosphate = D-ribulose 5-phosphate</text>
        <dbReference type="Rhea" id="RHEA:14657"/>
        <dbReference type="ChEBI" id="CHEBI:58121"/>
        <dbReference type="ChEBI" id="CHEBI:58273"/>
        <dbReference type="EC" id="5.3.1.6"/>
    </reaction>
</comment>
<comment type="activity regulation">
    <text evidence="1">Weakly inhibited by phosphate and completely inhibited by iodoacetate.</text>
</comment>
<comment type="biophysicochemical properties">
    <kinetics>
        <KM evidence="3">1 mM for D-ribose 5-phosphate</KM>
        <KM evidence="1">3.7 mM for D-ribose 5-phosphate</KM>
        <text evidence="1">kcat is 120 sec(-1) for D-ribose 5-phosphate.</text>
    </kinetics>
</comment>
<comment type="pathway">
    <text evidence="7">Carbohydrate degradation; pentose phosphate pathway; D-ribose 5-phosphate from D-ribulose 5-phosphate (non-oxidative stage): step 1/1.</text>
</comment>
<comment type="subunit">
    <text evidence="1 6 7">Homodimer.</text>
</comment>
<comment type="miscellaneous">
    <text evidence="1">In mycobacterial enzymes, the usual proton acceptor is not a cysteine, but is remplaced by a glutamate.</text>
</comment>
<comment type="similarity">
    <text evidence="5">Belongs to the LacAB/RpiB family.</text>
</comment>
<evidence type="ECO:0000269" key="1">
    <source>
    </source>
</evidence>
<evidence type="ECO:0000269" key="2">
    <source>
    </source>
</evidence>
<evidence type="ECO:0000269" key="3">
    <source>
    </source>
</evidence>
<evidence type="ECO:0000303" key="4">
    <source>
    </source>
</evidence>
<evidence type="ECO:0000305" key="5"/>
<evidence type="ECO:0000305" key="6">
    <source>
    </source>
</evidence>
<evidence type="ECO:0000305" key="7">
    <source>
    </source>
</evidence>
<evidence type="ECO:0007744" key="8">
    <source>
        <dbReference type="PDB" id="1USL"/>
    </source>
</evidence>
<evidence type="ECO:0007744" key="9">
    <source>
        <dbReference type="PDB" id="2BES"/>
    </source>
</evidence>
<evidence type="ECO:0007744" key="10">
    <source>
        <dbReference type="PDB" id="2BET"/>
    </source>
</evidence>
<evidence type="ECO:0007744" key="11">
    <source>
        <dbReference type="PDB" id="2VVO"/>
    </source>
</evidence>
<evidence type="ECO:0007744" key="12">
    <source>
        <dbReference type="PDB" id="2VVP"/>
    </source>
</evidence>
<evidence type="ECO:0007744" key="13">
    <source>
        <dbReference type="PDB" id="2VVQ"/>
    </source>
</evidence>
<evidence type="ECO:0007829" key="14">
    <source>
        <dbReference type="PDB" id="2VVP"/>
    </source>
</evidence>
<proteinExistence type="evidence at protein level"/>
<name>RPIB_MYCTU</name>
<dbReference type="EC" id="5.3.1.6" evidence="1 3"/>
<dbReference type="EMBL" id="AL123456">
    <property type="protein sequence ID" value="CCP45258.1"/>
    <property type="molecule type" value="Genomic_DNA"/>
</dbReference>
<dbReference type="RefSeq" id="WP_003899332.1">
    <property type="nucleotide sequence ID" value="NC_000962.3"/>
</dbReference>
<dbReference type="RefSeq" id="YP_177884.1">
    <property type="nucleotide sequence ID" value="NC_000962.3"/>
</dbReference>
<dbReference type="PDB" id="1USL">
    <property type="method" value="X-ray"/>
    <property type="resolution" value="1.88 A"/>
    <property type="chains" value="A/B/C/D/E=1-162"/>
</dbReference>
<dbReference type="PDB" id="2BES">
    <property type="method" value="X-ray"/>
    <property type="resolution" value="2.10 A"/>
    <property type="chains" value="A/B/C/D/E=1-162"/>
</dbReference>
<dbReference type="PDB" id="2BET">
    <property type="method" value="X-ray"/>
    <property type="resolution" value="2.20 A"/>
    <property type="chains" value="A/B/C/D/E=1-162"/>
</dbReference>
<dbReference type="PDB" id="2VVO">
    <property type="method" value="X-ray"/>
    <property type="resolution" value="1.85 A"/>
    <property type="chains" value="A/B/C/D/E=1-162"/>
</dbReference>
<dbReference type="PDB" id="2VVP">
    <property type="method" value="X-ray"/>
    <property type="resolution" value="1.65 A"/>
    <property type="chains" value="A/B/C/D/E=1-162"/>
</dbReference>
<dbReference type="PDB" id="2VVQ">
    <property type="method" value="X-ray"/>
    <property type="resolution" value="2.00 A"/>
    <property type="chains" value="A/B/C/D/E=1-162"/>
</dbReference>
<dbReference type="PDBsum" id="1USL"/>
<dbReference type="PDBsum" id="2BES"/>
<dbReference type="PDBsum" id="2BET"/>
<dbReference type="PDBsum" id="2VVO"/>
<dbReference type="PDBsum" id="2VVP"/>
<dbReference type="PDBsum" id="2VVQ"/>
<dbReference type="SMR" id="P9WKD7"/>
<dbReference type="FunCoup" id="P9WKD7">
    <property type="interactions" value="199"/>
</dbReference>
<dbReference type="STRING" id="83332.Rv2465c"/>
<dbReference type="BindingDB" id="P9WKD7"/>
<dbReference type="ChEMBL" id="CHEMBL1770044"/>
<dbReference type="DrugBank" id="DB03108">
    <property type="generic name" value="4-phospho-D-erythronic acid"/>
</dbReference>
<dbReference type="DrugBank" id="DB04496">
    <property type="generic name" value="4-Phospho-D-erythronohydroxamic acid"/>
</dbReference>
<dbReference type="PaxDb" id="83332-Rv2465c"/>
<dbReference type="DNASU" id="887225"/>
<dbReference type="GeneID" id="887225"/>
<dbReference type="KEGG" id="mtu:Rv2465c"/>
<dbReference type="KEGG" id="mtv:RVBD_2465c"/>
<dbReference type="PATRIC" id="fig|83332.111.peg.2759"/>
<dbReference type="TubercuList" id="Rv2465c"/>
<dbReference type="eggNOG" id="COG0698">
    <property type="taxonomic scope" value="Bacteria"/>
</dbReference>
<dbReference type="InParanoid" id="P9WKD7"/>
<dbReference type="OrthoDB" id="1778624at2"/>
<dbReference type="PhylomeDB" id="P9WKD7"/>
<dbReference type="BRENDA" id="5.3.1.6">
    <property type="organism ID" value="3445"/>
</dbReference>
<dbReference type="SABIO-RK" id="P9WKD7"/>
<dbReference type="UniPathway" id="UPA00115">
    <property type="reaction ID" value="UER00412"/>
</dbReference>
<dbReference type="EvolutionaryTrace" id="P9WKD7"/>
<dbReference type="PRO" id="PR:P9WKD7"/>
<dbReference type="Proteomes" id="UP000001584">
    <property type="component" value="Chromosome"/>
</dbReference>
<dbReference type="GO" id="GO:0005576">
    <property type="term" value="C:extracellular region"/>
    <property type="evidence" value="ECO:0007005"/>
    <property type="project" value="MTBBASE"/>
</dbReference>
<dbReference type="GO" id="GO:0004751">
    <property type="term" value="F:ribose-5-phosphate isomerase activity"/>
    <property type="evidence" value="ECO:0000314"/>
    <property type="project" value="MTBBASE"/>
</dbReference>
<dbReference type="GO" id="GO:0019316">
    <property type="term" value="P:D-allose catabolic process"/>
    <property type="evidence" value="ECO:0000318"/>
    <property type="project" value="GO_Central"/>
</dbReference>
<dbReference type="GO" id="GO:0009052">
    <property type="term" value="P:pentose-phosphate shunt, non-oxidative branch"/>
    <property type="evidence" value="ECO:0000314"/>
    <property type="project" value="MTBBASE"/>
</dbReference>
<dbReference type="FunFam" id="3.40.1400.10:FF:000002">
    <property type="entry name" value="Ribose-5-phosphate isomerase B"/>
    <property type="match status" value="1"/>
</dbReference>
<dbReference type="Gene3D" id="3.40.1400.10">
    <property type="entry name" value="Sugar-phosphate isomerase, RpiB/LacA/LacB"/>
    <property type="match status" value="1"/>
</dbReference>
<dbReference type="InterPro" id="IPR011860">
    <property type="entry name" value="Rib-5-P_Isoase_Actino"/>
</dbReference>
<dbReference type="InterPro" id="IPR003500">
    <property type="entry name" value="RpiB_LacA_LacB"/>
</dbReference>
<dbReference type="InterPro" id="IPR036569">
    <property type="entry name" value="RpiB_LacA_LacB_sf"/>
</dbReference>
<dbReference type="NCBIfam" id="NF004051">
    <property type="entry name" value="PRK05571.1"/>
    <property type="match status" value="1"/>
</dbReference>
<dbReference type="NCBIfam" id="TIGR02133">
    <property type="entry name" value="RPI_actino"/>
    <property type="match status" value="1"/>
</dbReference>
<dbReference type="NCBIfam" id="TIGR00689">
    <property type="entry name" value="rpiB_lacA_lacB"/>
    <property type="match status" value="1"/>
</dbReference>
<dbReference type="PANTHER" id="PTHR30345:SF0">
    <property type="entry name" value="DNA DAMAGE-REPAIR_TOLERATION PROTEIN DRT102"/>
    <property type="match status" value="1"/>
</dbReference>
<dbReference type="PANTHER" id="PTHR30345">
    <property type="entry name" value="RIBOSE-5-PHOSPHATE ISOMERASE B"/>
    <property type="match status" value="1"/>
</dbReference>
<dbReference type="Pfam" id="PF02502">
    <property type="entry name" value="LacAB_rpiB"/>
    <property type="match status" value="1"/>
</dbReference>
<dbReference type="PIRSF" id="PIRSF005384">
    <property type="entry name" value="RpiB_LacA_B"/>
    <property type="match status" value="1"/>
</dbReference>
<dbReference type="SUPFAM" id="SSF89623">
    <property type="entry name" value="Ribose/Galactose isomerase RpiB/AlsB"/>
    <property type="match status" value="1"/>
</dbReference>
<accession>P9WKD7</accession>
<accession>L0TCF4</accession>
<accession>Q79FD7</accession>
<accession>Q7D737</accession>